<proteinExistence type="inferred from homology"/>
<feature type="chain" id="PRO_0000282036" description="23S rRNA (uracil(1939)-C(5))-methyltransferase RlmD">
    <location>
        <begin position="1"/>
        <end position="472"/>
    </location>
</feature>
<feature type="domain" description="TRAM" evidence="1">
    <location>
        <begin position="23"/>
        <end position="87"/>
    </location>
</feature>
<feature type="region of interest" description="Disordered" evidence="2">
    <location>
        <begin position="1"/>
        <end position="23"/>
    </location>
</feature>
<feature type="compositionally biased region" description="Basic residues" evidence="2">
    <location>
        <begin position="1"/>
        <end position="15"/>
    </location>
</feature>
<feature type="active site" description="Nucleophile" evidence="1">
    <location>
        <position position="428"/>
    </location>
</feature>
<feature type="binding site" evidence="1">
    <location>
        <position position="100"/>
    </location>
    <ligand>
        <name>[4Fe-4S] cluster</name>
        <dbReference type="ChEBI" id="CHEBI:49883"/>
    </ligand>
</feature>
<feature type="binding site" evidence="1">
    <location>
        <position position="106"/>
    </location>
    <ligand>
        <name>[4Fe-4S] cluster</name>
        <dbReference type="ChEBI" id="CHEBI:49883"/>
    </ligand>
</feature>
<feature type="binding site" evidence="1">
    <location>
        <position position="109"/>
    </location>
    <ligand>
        <name>[4Fe-4S] cluster</name>
        <dbReference type="ChEBI" id="CHEBI:49883"/>
    </ligand>
</feature>
<feature type="binding site" evidence="1">
    <location>
        <position position="188"/>
    </location>
    <ligand>
        <name>[4Fe-4S] cluster</name>
        <dbReference type="ChEBI" id="CHEBI:49883"/>
    </ligand>
</feature>
<feature type="binding site" evidence="1">
    <location>
        <position position="296"/>
    </location>
    <ligand>
        <name>S-adenosyl-L-methionine</name>
        <dbReference type="ChEBI" id="CHEBI:59789"/>
    </ligand>
</feature>
<feature type="binding site" evidence="1">
    <location>
        <position position="325"/>
    </location>
    <ligand>
        <name>S-adenosyl-L-methionine</name>
        <dbReference type="ChEBI" id="CHEBI:59789"/>
    </ligand>
</feature>
<feature type="binding site" evidence="1">
    <location>
        <position position="330"/>
    </location>
    <ligand>
        <name>S-adenosyl-L-methionine</name>
        <dbReference type="ChEBI" id="CHEBI:59789"/>
    </ligand>
</feature>
<feature type="binding site" evidence="1">
    <location>
        <position position="346"/>
    </location>
    <ligand>
        <name>S-adenosyl-L-methionine</name>
        <dbReference type="ChEBI" id="CHEBI:59789"/>
    </ligand>
</feature>
<feature type="binding site" evidence="1">
    <location>
        <position position="374"/>
    </location>
    <ligand>
        <name>S-adenosyl-L-methionine</name>
        <dbReference type="ChEBI" id="CHEBI:59789"/>
    </ligand>
</feature>
<feature type="binding site" evidence="1">
    <location>
        <position position="395"/>
    </location>
    <ligand>
        <name>S-adenosyl-L-methionine</name>
        <dbReference type="ChEBI" id="CHEBI:59789"/>
    </ligand>
</feature>
<keyword id="KW-0004">4Fe-4S</keyword>
<keyword id="KW-0408">Iron</keyword>
<keyword id="KW-0411">Iron-sulfur</keyword>
<keyword id="KW-0479">Metal-binding</keyword>
<keyword id="KW-0489">Methyltransferase</keyword>
<keyword id="KW-1185">Reference proteome</keyword>
<keyword id="KW-0698">rRNA processing</keyword>
<keyword id="KW-0949">S-adenosyl-L-methionine</keyword>
<keyword id="KW-0808">Transferase</keyword>
<protein>
    <recommendedName>
        <fullName evidence="1">23S rRNA (uracil(1939)-C(5))-methyltransferase RlmD</fullName>
        <ecNumber evidence="1">2.1.1.190</ecNumber>
    </recommendedName>
    <alternativeName>
        <fullName evidence="1">23S rRNA(m5U1939)-methyltransferase</fullName>
    </alternativeName>
</protein>
<name>RLMD_PARXL</name>
<reference key="1">
    <citation type="journal article" date="2006" name="Proc. Natl. Acad. Sci. U.S.A.">
        <title>Burkholderia xenovorans LB400 harbors a multi-replicon, 9.73-Mbp genome shaped for versatility.</title>
        <authorList>
            <person name="Chain P.S.G."/>
            <person name="Denef V.J."/>
            <person name="Konstantinidis K.T."/>
            <person name="Vergez L.M."/>
            <person name="Agullo L."/>
            <person name="Reyes V.L."/>
            <person name="Hauser L."/>
            <person name="Cordova M."/>
            <person name="Gomez L."/>
            <person name="Gonzalez M."/>
            <person name="Land M."/>
            <person name="Lao V."/>
            <person name="Larimer F."/>
            <person name="LiPuma J.J."/>
            <person name="Mahenthiralingam E."/>
            <person name="Malfatti S.A."/>
            <person name="Marx C.J."/>
            <person name="Parnell J.J."/>
            <person name="Ramette A."/>
            <person name="Richardson P."/>
            <person name="Seeger M."/>
            <person name="Smith D."/>
            <person name="Spilker T."/>
            <person name="Sul W.J."/>
            <person name="Tsoi T.V."/>
            <person name="Ulrich L.E."/>
            <person name="Zhulin I.B."/>
            <person name="Tiedje J.M."/>
        </authorList>
    </citation>
    <scope>NUCLEOTIDE SEQUENCE [LARGE SCALE GENOMIC DNA]</scope>
    <source>
        <strain>LB400</strain>
    </source>
</reference>
<gene>
    <name evidence="1" type="primary">rlmD</name>
    <name type="synonym">rumA</name>
    <name type="ordered locus">Bxeno_A2084</name>
    <name type="ORF">Bxe_A2348</name>
</gene>
<organism>
    <name type="scientific">Paraburkholderia xenovorans (strain LB400)</name>
    <dbReference type="NCBI Taxonomy" id="266265"/>
    <lineage>
        <taxon>Bacteria</taxon>
        <taxon>Pseudomonadati</taxon>
        <taxon>Pseudomonadota</taxon>
        <taxon>Betaproteobacteria</taxon>
        <taxon>Burkholderiales</taxon>
        <taxon>Burkholderiaceae</taxon>
        <taxon>Paraburkholderia</taxon>
    </lineage>
</organism>
<comment type="function">
    <text evidence="1">Catalyzes the formation of 5-methyl-uridine at position 1939 (m5U1939) in 23S rRNA.</text>
</comment>
<comment type="catalytic activity">
    <reaction evidence="1">
        <text>uridine(1939) in 23S rRNA + S-adenosyl-L-methionine = 5-methyluridine(1939) in 23S rRNA + S-adenosyl-L-homocysteine + H(+)</text>
        <dbReference type="Rhea" id="RHEA:42908"/>
        <dbReference type="Rhea" id="RHEA-COMP:10278"/>
        <dbReference type="Rhea" id="RHEA-COMP:10279"/>
        <dbReference type="ChEBI" id="CHEBI:15378"/>
        <dbReference type="ChEBI" id="CHEBI:57856"/>
        <dbReference type="ChEBI" id="CHEBI:59789"/>
        <dbReference type="ChEBI" id="CHEBI:65315"/>
        <dbReference type="ChEBI" id="CHEBI:74447"/>
        <dbReference type="EC" id="2.1.1.190"/>
    </reaction>
</comment>
<comment type="similarity">
    <text evidence="1">Belongs to the class I-like SAM-binding methyltransferase superfamily. RNA M5U methyltransferase family. RlmD subfamily.</text>
</comment>
<comment type="sequence caution" evidence="3">
    <conflict type="erroneous initiation">
        <sequence resource="EMBL-CDS" id="ABE30622"/>
    </conflict>
</comment>
<dbReference type="EC" id="2.1.1.190" evidence="1"/>
<dbReference type="EMBL" id="CP000270">
    <property type="protein sequence ID" value="ABE30622.1"/>
    <property type="status" value="ALT_INIT"/>
    <property type="molecule type" value="Genomic_DNA"/>
</dbReference>
<dbReference type="RefSeq" id="WP_011488254.1">
    <property type="nucleotide sequence ID" value="NC_007951.1"/>
</dbReference>
<dbReference type="SMR" id="Q13Z67"/>
<dbReference type="STRING" id="266265.Bxe_A2348"/>
<dbReference type="KEGG" id="bxb:DR64_52"/>
<dbReference type="KEGG" id="bxe:Bxe_A2348"/>
<dbReference type="PATRIC" id="fig|266265.5.peg.2180"/>
<dbReference type="eggNOG" id="COG2265">
    <property type="taxonomic scope" value="Bacteria"/>
</dbReference>
<dbReference type="OrthoDB" id="9804590at2"/>
<dbReference type="Proteomes" id="UP000001817">
    <property type="component" value="Chromosome 1"/>
</dbReference>
<dbReference type="GO" id="GO:0051539">
    <property type="term" value="F:4 iron, 4 sulfur cluster binding"/>
    <property type="evidence" value="ECO:0007669"/>
    <property type="project" value="UniProtKB-KW"/>
</dbReference>
<dbReference type="GO" id="GO:0005506">
    <property type="term" value="F:iron ion binding"/>
    <property type="evidence" value="ECO:0007669"/>
    <property type="project" value="UniProtKB-UniRule"/>
</dbReference>
<dbReference type="GO" id="GO:0003723">
    <property type="term" value="F:RNA binding"/>
    <property type="evidence" value="ECO:0007669"/>
    <property type="project" value="InterPro"/>
</dbReference>
<dbReference type="GO" id="GO:0070041">
    <property type="term" value="F:rRNA (uridine-C5-)-methyltransferase activity"/>
    <property type="evidence" value="ECO:0007669"/>
    <property type="project" value="UniProtKB-UniRule"/>
</dbReference>
<dbReference type="GO" id="GO:0070475">
    <property type="term" value="P:rRNA base methylation"/>
    <property type="evidence" value="ECO:0007669"/>
    <property type="project" value="TreeGrafter"/>
</dbReference>
<dbReference type="CDD" id="cd02440">
    <property type="entry name" value="AdoMet_MTases"/>
    <property type="match status" value="1"/>
</dbReference>
<dbReference type="Gene3D" id="2.40.50.1070">
    <property type="match status" value="1"/>
</dbReference>
<dbReference type="Gene3D" id="2.40.50.140">
    <property type="entry name" value="Nucleic acid-binding proteins"/>
    <property type="match status" value="1"/>
</dbReference>
<dbReference type="Gene3D" id="3.40.50.150">
    <property type="entry name" value="Vaccinia Virus protein VP39"/>
    <property type="match status" value="1"/>
</dbReference>
<dbReference type="HAMAP" id="MF_01010">
    <property type="entry name" value="23SrRNA_methyltr_RlmD"/>
    <property type="match status" value="1"/>
</dbReference>
<dbReference type="InterPro" id="IPR001566">
    <property type="entry name" value="23S_rRNA_MeTrfase_RlmD"/>
</dbReference>
<dbReference type="InterPro" id="IPR030391">
    <property type="entry name" value="MeTrfase_TrmA_CS"/>
</dbReference>
<dbReference type="InterPro" id="IPR012340">
    <property type="entry name" value="NA-bd_OB-fold"/>
</dbReference>
<dbReference type="InterPro" id="IPR029063">
    <property type="entry name" value="SAM-dependent_MTases_sf"/>
</dbReference>
<dbReference type="InterPro" id="IPR002792">
    <property type="entry name" value="TRAM_dom"/>
</dbReference>
<dbReference type="InterPro" id="IPR010280">
    <property type="entry name" value="U5_MeTrfase_fam"/>
</dbReference>
<dbReference type="NCBIfam" id="NF009639">
    <property type="entry name" value="PRK13168.1"/>
    <property type="match status" value="1"/>
</dbReference>
<dbReference type="PANTHER" id="PTHR11061:SF49">
    <property type="entry name" value="23S RRNA (URACIL(1939)-C(5))-METHYLTRANSFERASE RLMD"/>
    <property type="match status" value="1"/>
</dbReference>
<dbReference type="PANTHER" id="PTHR11061">
    <property type="entry name" value="RNA M5U METHYLTRANSFERASE"/>
    <property type="match status" value="1"/>
</dbReference>
<dbReference type="Pfam" id="PF05958">
    <property type="entry name" value="tRNA_U5-meth_tr"/>
    <property type="match status" value="1"/>
</dbReference>
<dbReference type="SUPFAM" id="SSF50249">
    <property type="entry name" value="Nucleic acid-binding proteins"/>
    <property type="match status" value="1"/>
</dbReference>
<dbReference type="SUPFAM" id="SSF53335">
    <property type="entry name" value="S-adenosyl-L-methionine-dependent methyltransferases"/>
    <property type="match status" value="1"/>
</dbReference>
<dbReference type="PROSITE" id="PS51687">
    <property type="entry name" value="SAM_MT_RNA_M5U"/>
    <property type="match status" value="1"/>
</dbReference>
<dbReference type="PROSITE" id="PS50926">
    <property type="entry name" value="TRAM"/>
    <property type="match status" value="1"/>
</dbReference>
<dbReference type="PROSITE" id="PS01231">
    <property type="entry name" value="TRMA_2"/>
    <property type="match status" value="1"/>
</dbReference>
<sequence length="472" mass="52414">MSRTAPHRRAPKRYKTPPPAPAHVVTGNEPVIEIISLDMEARGVGRTETEDGTPGKVIFVEGVLPGERVSYSTHRSKPKFEQAEVVQVLRESVMRTKPKCTYFDICGGCSMQHLDIRAQVAVKQRVLEDNLQHLAKLRPETVFRPIHGPSWGYRYRARLAVRFLPEKGGMRIGFHEKKSSYIADMKTCEVLPPHVSAMLMPLRFMVRKLSIYDRMPQLELAVGSSVTALVVRNLEPITAADEQVLRDFADEHKVQFWLQPGGPDTVTPFYPLDVQLDYTLPEYGIRMPFKPTDFTQVNHAINRVLVSRALRLLAPARTDRVLDLFCGIGNFTLPLARISKEVMGIEGSEVLTSRALANAGLNGVAGHTSFECRNLFEVTADDLRALGHFDKFLIDPPREGALAVAKALAEIARSGNGPLPKRIVYVSCAPATLARDAGLLVHEAGYRLVGAGVVNMFPHTSHVESIALFERD</sequence>
<accession>Q13Z67</accession>
<evidence type="ECO:0000255" key="1">
    <source>
        <dbReference type="HAMAP-Rule" id="MF_01010"/>
    </source>
</evidence>
<evidence type="ECO:0000256" key="2">
    <source>
        <dbReference type="SAM" id="MobiDB-lite"/>
    </source>
</evidence>
<evidence type="ECO:0000305" key="3"/>